<organism>
    <name type="scientific">Schizosaccharomyces pombe (strain 972 / ATCC 24843)</name>
    <name type="common">Fission yeast</name>
    <dbReference type="NCBI Taxonomy" id="284812"/>
    <lineage>
        <taxon>Eukaryota</taxon>
        <taxon>Fungi</taxon>
        <taxon>Dikarya</taxon>
        <taxon>Ascomycota</taxon>
        <taxon>Taphrinomycotina</taxon>
        <taxon>Schizosaccharomycetes</taxon>
        <taxon>Schizosaccharomycetales</taxon>
        <taxon>Schizosaccharomycetaceae</taxon>
        <taxon>Schizosaccharomyces</taxon>
    </lineage>
</organism>
<gene>
    <name type="ORF">SPBC29A3.21</name>
</gene>
<accession>Q9C0X0</accession>
<evidence type="ECO:0000269" key="1">
    <source>
    </source>
</evidence>
<dbReference type="EMBL" id="CU329671">
    <property type="protein sequence ID" value="CAC35073.1"/>
    <property type="molecule type" value="Genomic_DNA"/>
</dbReference>
<dbReference type="RefSeq" id="XP_001713134.1">
    <property type="nucleotide sequence ID" value="XM_001713082.1"/>
</dbReference>
<dbReference type="BioGRID" id="857924">
    <property type="interactions" value="1"/>
</dbReference>
<dbReference type="PaxDb" id="4896-SPBC29A3.21.1"/>
<dbReference type="EnsemblFungi" id="SPBC29A3.21.1">
    <property type="protein sequence ID" value="SPBC29A3.21.1:pep"/>
    <property type="gene ID" value="SPBC29A3.21"/>
</dbReference>
<dbReference type="PomBase" id="SPBC29A3.21"/>
<dbReference type="VEuPathDB" id="FungiDB:SPBC29A3.21"/>
<dbReference type="HOGENOM" id="CLU_2307677_0_0_1"/>
<dbReference type="InParanoid" id="Q9C0X0"/>
<dbReference type="PRO" id="PR:Q9C0X0"/>
<dbReference type="Proteomes" id="UP000002485">
    <property type="component" value="Chromosome II"/>
</dbReference>
<dbReference type="GO" id="GO:0005737">
    <property type="term" value="C:cytoplasm"/>
    <property type="evidence" value="ECO:0007005"/>
    <property type="project" value="PomBase"/>
</dbReference>
<dbReference type="GO" id="GO:0005783">
    <property type="term" value="C:endoplasmic reticulum"/>
    <property type="evidence" value="ECO:0007005"/>
    <property type="project" value="PomBase"/>
</dbReference>
<reference key="1">
    <citation type="journal article" date="2002" name="Nature">
        <title>The genome sequence of Schizosaccharomyces pombe.</title>
        <authorList>
            <person name="Wood V."/>
            <person name="Gwilliam R."/>
            <person name="Rajandream M.A."/>
            <person name="Lyne M.H."/>
            <person name="Lyne R."/>
            <person name="Stewart A."/>
            <person name="Sgouros J.G."/>
            <person name="Peat N."/>
            <person name="Hayles J."/>
            <person name="Baker S.G."/>
            <person name="Basham D."/>
            <person name="Bowman S."/>
            <person name="Brooks K."/>
            <person name="Brown D."/>
            <person name="Brown S."/>
            <person name="Chillingworth T."/>
            <person name="Churcher C.M."/>
            <person name="Collins M."/>
            <person name="Connor R."/>
            <person name="Cronin A."/>
            <person name="Davis P."/>
            <person name="Feltwell T."/>
            <person name="Fraser A."/>
            <person name="Gentles S."/>
            <person name="Goble A."/>
            <person name="Hamlin N."/>
            <person name="Harris D.E."/>
            <person name="Hidalgo J."/>
            <person name="Hodgson G."/>
            <person name="Holroyd S."/>
            <person name="Hornsby T."/>
            <person name="Howarth S."/>
            <person name="Huckle E.J."/>
            <person name="Hunt S."/>
            <person name="Jagels K."/>
            <person name="James K.D."/>
            <person name="Jones L."/>
            <person name="Jones M."/>
            <person name="Leather S."/>
            <person name="McDonald S."/>
            <person name="McLean J."/>
            <person name="Mooney P."/>
            <person name="Moule S."/>
            <person name="Mungall K.L."/>
            <person name="Murphy L.D."/>
            <person name="Niblett D."/>
            <person name="Odell C."/>
            <person name="Oliver K."/>
            <person name="O'Neil S."/>
            <person name="Pearson D."/>
            <person name="Quail M.A."/>
            <person name="Rabbinowitsch E."/>
            <person name="Rutherford K.M."/>
            <person name="Rutter S."/>
            <person name="Saunders D."/>
            <person name="Seeger K."/>
            <person name="Sharp S."/>
            <person name="Skelton J."/>
            <person name="Simmonds M.N."/>
            <person name="Squares R."/>
            <person name="Squares S."/>
            <person name="Stevens K."/>
            <person name="Taylor K."/>
            <person name="Taylor R.G."/>
            <person name="Tivey A."/>
            <person name="Walsh S.V."/>
            <person name="Warren T."/>
            <person name="Whitehead S."/>
            <person name="Woodward J.R."/>
            <person name="Volckaert G."/>
            <person name="Aert R."/>
            <person name="Robben J."/>
            <person name="Grymonprez B."/>
            <person name="Weltjens I."/>
            <person name="Vanstreels E."/>
            <person name="Rieger M."/>
            <person name="Schaefer M."/>
            <person name="Mueller-Auer S."/>
            <person name="Gabel C."/>
            <person name="Fuchs M."/>
            <person name="Duesterhoeft A."/>
            <person name="Fritzc C."/>
            <person name="Holzer E."/>
            <person name="Moestl D."/>
            <person name="Hilbert H."/>
            <person name="Borzym K."/>
            <person name="Langer I."/>
            <person name="Beck A."/>
            <person name="Lehrach H."/>
            <person name="Reinhardt R."/>
            <person name="Pohl T.M."/>
            <person name="Eger P."/>
            <person name="Zimmermann W."/>
            <person name="Wedler H."/>
            <person name="Wambutt R."/>
            <person name="Purnelle B."/>
            <person name="Goffeau A."/>
            <person name="Cadieu E."/>
            <person name="Dreano S."/>
            <person name="Gloux S."/>
            <person name="Lelaure V."/>
            <person name="Mottier S."/>
            <person name="Galibert F."/>
            <person name="Aves S.J."/>
            <person name="Xiang Z."/>
            <person name="Hunt C."/>
            <person name="Moore K."/>
            <person name="Hurst S.M."/>
            <person name="Lucas M."/>
            <person name="Rochet M."/>
            <person name="Gaillardin C."/>
            <person name="Tallada V.A."/>
            <person name="Garzon A."/>
            <person name="Thode G."/>
            <person name="Daga R.R."/>
            <person name="Cruzado L."/>
            <person name="Jimenez J."/>
            <person name="Sanchez M."/>
            <person name="del Rey F."/>
            <person name="Benito J."/>
            <person name="Dominguez A."/>
            <person name="Revuelta J.L."/>
            <person name="Moreno S."/>
            <person name="Armstrong J."/>
            <person name="Forsburg S.L."/>
            <person name="Cerutti L."/>
            <person name="Lowe T."/>
            <person name="McCombie W.R."/>
            <person name="Paulsen I."/>
            <person name="Potashkin J."/>
            <person name="Shpakovski G.V."/>
            <person name="Ussery D."/>
            <person name="Barrell B.G."/>
            <person name="Nurse P."/>
        </authorList>
    </citation>
    <scope>NUCLEOTIDE SEQUENCE [LARGE SCALE GENOMIC DNA]</scope>
    <source>
        <strain>972 / ATCC 24843</strain>
    </source>
</reference>
<reference key="2">
    <citation type="journal article" date="2006" name="Nat. Biotechnol.">
        <title>ORFeome cloning and global analysis of protein localization in the fission yeast Schizosaccharomyces pombe.</title>
        <authorList>
            <person name="Matsuyama A."/>
            <person name="Arai R."/>
            <person name="Yashiroda Y."/>
            <person name="Shirai A."/>
            <person name="Kamata A."/>
            <person name="Sekido S."/>
            <person name="Kobayashi Y."/>
            <person name="Hashimoto A."/>
            <person name="Hamamoto M."/>
            <person name="Hiraoka Y."/>
            <person name="Horinouchi S."/>
            <person name="Yoshida M."/>
        </authorList>
    </citation>
    <scope>SUBCELLULAR LOCATION [LARGE SCALE ANALYSIS]</scope>
</reference>
<name>YB8L_SCHPO</name>
<sequence length="100" mass="11897">MLRYNFRYLHNVLSHTVVFCFTEVSLHIVKQLGVESYACTVHASRFQKSYSASIDYCQRFLFSSNLKHNYVNLNIIFTSCIFRSLREFLRFYIAAIMCFL</sequence>
<comment type="subcellular location">
    <subcellularLocation>
        <location evidence="1">Cytoplasm</location>
    </subcellularLocation>
    <subcellularLocation>
        <location evidence="1">Endoplasmic reticulum</location>
    </subcellularLocation>
</comment>
<proteinExistence type="predicted"/>
<protein>
    <recommendedName>
        <fullName>Uncharacterized protein C29A3.21</fullName>
    </recommendedName>
</protein>
<keyword id="KW-0963">Cytoplasm</keyword>
<keyword id="KW-0256">Endoplasmic reticulum</keyword>
<keyword id="KW-1185">Reference proteome</keyword>
<feature type="chain" id="PRO_0000303936" description="Uncharacterized protein C29A3.21">
    <location>
        <begin position="1"/>
        <end position="100"/>
    </location>
</feature>